<gene>
    <name evidence="1" type="primary">pstB1</name>
    <name type="ordered locus">VV0730</name>
</gene>
<evidence type="ECO:0000255" key="1">
    <source>
        <dbReference type="HAMAP-Rule" id="MF_01702"/>
    </source>
</evidence>
<sequence>MYSFNDTLGYHAPLDVNNLPDDKTAITIENLDLHYGQSQALYDISMRIPKGRVTAFIGPSGCGKSTLLRCINRMNDLVEGCKVTGSVKLYGSNVYDPSVDVATLRRRVGMVFQRPNPFPKSIYENVVYGLRLQGVKNSRTLDDAVERSLRSAALWDEVKDRLHENAFGLSGGQQQRLVIARAVAIEPEVLLLDEPTSALDPISTLTIEELINDLKTQYTVVIVTHNMQQAARVSDYTAFIHMGKLIEYSDADTIFTSPMKKQTEDYITGRYG</sequence>
<proteinExistence type="inferred from homology"/>
<feature type="chain" id="PRO_0000092931" description="Phosphate import ATP-binding protein PstB 1">
    <location>
        <begin position="1"/>
        <end position="272"/>
    </location>
</feature>
<feature type="domain" description="ABC transporter" evidence="1">
    <location>
        <begin position="26"/>
        <end position="267"/>
    </location>
</feature>
<feature type="binding site" evidence="1">
    <location>
        <begin position="58"/>
        <end position="65"/>
    </location>
    <ligand>
        <name>ATP</name>
        <dbReference type="ChEBI" id="CHEBI:30616"/>
    </ligand>
</feature>
<organism>
    <name type="scientific">Vibrio vulnificus (strain YJ016)</name>
    <dbReference type="NCBI Taxonomy" id="196600"/>
    <lineage>
        <taxon>Bacteria</taxon>
        <taxon>Pseudomonadati</taxon>
        <taxon>Pseudomonadota</taxon>
        <taxon>Gammaproteobacteria</taxon>
        <taxon>Vibrionales</taxon>
        <taxon>Vibrionaceae</taxon>
        <taxon>Vibrio</taxon>
    </lineage>
</organism>
<comment type="function">
    <text evidence="1">Part of the ABC transporter complex PstSACB involved in phosphate import. Responsible for energy coupling to the transport system.</text>
</comment>
<comment type="catalytic activity">
    <reaction evidence="1">
        <text>phosphate(out) + ATP + H2O = ADP + 2 phosphate(in) + H(+)</text>
        <dbReference type="Rhea" id="RHEA:24440"/>
        <dbReference type="ChEBI" id="CHEBI:15377"/>
        <dbReference type="ChEBI" id="CHEBI:15378"/>
        <dbReference type="ChEBI" id="CHEBI:30616"/>
        <dbReference type="ChEBI" id="CHEBI:43474"/>
        <dbReference type="ChEBI" id="CHEBI:456216"/>
        <dbReference type="EC" id="7.3.2.1"/>
    </reaction>
</comment>
<comment type="subunit">
    <text evidence="1">The complex is composed of two ATP-binding proteins (PstB), two transmembrane proteins (PstC and PstA) and a solute-binding protein (PstS).</text>
</comment>
<comment type="subcellular location">
    <subcellularLocation>
        <location evidence="1">Cell inner membrane</location>
        <topology evidence="1">Peripheral membrane protein</topology>
    </subcellularLocation>
</comment>
<comment type="similarity">
    <text evidence="1">Belongs to the ABC transporter superfamily. Phosphate importer (TC 3.A.1.7) family.</text>
</comment>
<dbReference type="EC" id="7.3.2.1" evidence="1"/>
<dbReference type="EMBL" id="BA000037">
    <property type="protein sequence ID" value="BAC93494.1"/>
    <property type="molecule type" value="Genomic_DNA"/>
</dbReference>
<dbReference type="SMR" id="Q7MNI7"/>
<dbReference type="STRING" id="672.VV93_v1c06770"/>
<dbReference type="KEGG" id="vvy:VV0730"/>
<dbReference type="eggNOG" id="COG1117">
    <property type="taxonomic scope" value="Bacteria"/>
</dbReference>
<dbReference type="HOGENOM" id="CLU_000604_1_22_6"/>
<dbReference type="Proteomes" id="UP000002675">
    <property type="component" value="Chromosome I"/>
</dbReference>
<dbReference type="GO" id="GO:0005886">
    <property type="term" value="C:plasma membrane"/>
    <property type="evidence" value="ECO:0007669"/>
    <property type="project" value="UniProtKB-SubCell"/>
</dbReference>
<dbReference type="GO" id="GO:0005524">
    <property type="term" value="F:ATP binding"/>
    <property type="evidence" value="ECO:0007669"/>
    <property type="project" value="UniProtKB-KW"/>
</dbReference>
<dbReference type="GO" id="GO:0016887">
    <property type="term" value="F:ATP hydrolysis activity"/>
    <property type="evidence" value="ECO:0007669"/>
    <property type="project" value="InterPro"/>
</dbReference>
<dbReference type="GO" id="GO:0015415">
    <property type="term" value="F:ATPase-coupled phosphate ion transmembrane transporter activity"/>
    <property type="evidence" value="ECO:0007669"/>
    <property type="project" value="UniProtKB-EC"/>
</dbReference>
<dbReference type="GO" id="GO:0035435">
    <property type="term" value="P:phosphate ion transmembrane transport"/>
    <property type="evidence" value="ECO:0007669"/>
    <property type="project" value="InterPro"/>
</dbReference>
<dbReference type="CDD" id="cd03260">
    <property type="entry name" value="ABC_PstB_phosphate_transporter"/>
    <property type="match status" value="1"/>
</dbReference>
<dbReference type="FunFam" id="3.40.50.300:FF:000132">
    <property type="entry name" value="Phosphate import ATP-binding protein PstB"/>
    <property type="match status" value="1"/>
</dbReference>
<dbReference type="Gene3D" id="3.40.50.300">
    <property type="entry name" value="P-loop containing nucleotide triphosphate hydrolases"/>
    <property type="match status" value="1"/>
</dbReference>
<dbReference type="InterPro" id="IPR003593">
    <property type="entry name" value="AAA+_ATPase"/>
</dbReference>
<dbReference type="InterPro" id="IPR003439">
    <property type="entry name" value="ABC_transporter-like_ATP-bd"/>
</dbReference>
<dbReference type="InterPro" id="IPR017871">
    <property type="entry name" value="ABC_transporter-like_CS"/>
</dbReference>
<dbReference type="InterPro" id="IPR027417">
    <property type="entry name" value="P-loop_NTPase"/>
</dbReference>
<dbReference type="InterPro" id="IPR005670">
    <property type="entry name" value="PstB-like"/>
</dbReference>
<dbReference type="NCBIfam" id="TIGR00972">
    <property type="entry name" value="3a0107s01c2"/>
    <property type="match status" value="1"/>
</dbReference>
<dbReference type="PANTHER" id="PTHR43423">
    <property type="entry name" value="ABC TRANSPORTER I FAMILY MEMBER 17"/>
    <property type="match status" value="1"/>
</dbReference>
<dbReference type="PANTHER" id="PTHR43423:SF12">
    <property type="entry name" value="IRON EXPORT ATP-BINDING PROTEIN FETA-RELATED"/>
    <property type="match status" value="1"/>
</dbReference>
<dbReference type="Pfam" id="PF00005">
    <property type="entry name" value="ABC_tran"/>
    <property type="match status" value="1"/>
</dbReference>
<dbReference type="SMART" id="SM00382">
    <property type="entry name" value="AAA"/>
    <property type="match status" value="1"/>
</dbReference>
<dbReference type="SUPFAM" id="SSF52540">
    <property type="entry name" value="P-loop containing nucleoside triphosphate hydrolases"/>
    <property type="match status" value="1"/>
</dbReference>
<dbReference type="PROSITE" id="PS00211">
    <property type="entry name" value="ABC_TRANSPORTER_1"/>
    <property type="match status" value="1"/>
</dbReference>
<dbReference type="PROSITE" id="PS50893">
    <property type="entry name" value="ABC_TRANSPORTER_2"/>
    <property type="match status" value="1"/>
</dbReference>
<dbReference type="PROSITE" id="PS51238">
    <property type="entry name" value="PSTB"/>
    <property type="match status" value="1"/>
</dbReference>
<accession>Q7MNI7</accession>
<keyword id="KW-0067">ATP-binding</keyword>
<keyword id="KW-0997">Cell inner membrane</keyword>
<keyword id="KW-1003">Cell membrane</keyword>
<keyword id="KW-0472">Membrane</keyword>
<keyword id="KW-0547">Nucleotide-binding</keyword>
<keyword id="KW-0592">Phosphate transport</keyword>
<keyword id="KW-1278">Translocase</keyword>
<keyword id="KW-0813">Transport</keyword>
<name>PSTB1_VIBVY</name>
<reference key="1">
    <citation type="journal article" date="2003" name="Genome Res.">
        <title>Comparative genome analysis of Vibrio vulnificus, a marine pathogen.</title>
        <authorList>
            <person name="Chen C.-Y."/>
            <person name="Wu K.-M."/>
            <person name="Chang Y.-C."/>
            <person name="Chang C.-H."/>
            <person name="Tsai H.-C."/>
            <person name="Liao T.-L."/>
            <person name="Liu Y.-M."/>
            <person name="Chen H.-J."/>
            <person name="Shen A.B.-T."/>
            <person name="Li J.-C."/>
            <person name="Su T.-L."/>
            <person name="Shao C.-P."/>
            <person name="Lee C.-T."/>
            <person name="Hor L.-I."/>
            <person name="Tsai S.-F."/>
        </authorList>
    </citation>
    <scope>NUCLEOTIDE SEQUENCE [LARGE SCALE GENOMIC DNA]</scope>
    <source>
        <strain>YJ016</strain>
    </source>
</reference>
<protein>
    <recommendedName>
        <fullName evidence="1">Phosphate import ATP-binding protein PstB 1</fullName>
        <ecNumber evidence="1">7.3.2.1</ecNumber>
    </recommendedName>
    <alternativeName>
        <fullName evidence="1">ABC phosphate transporter 1</fullName>
    </alternativeName>
    <alternativeName>
        <fullName evidence="1">Phosphate-transporting ATPase 1</fullName>
    </alternativeName>
</protein>